<organism>
    <name type="scientific">Nitrobacter hamburgensis (strain DSM 10229 / NCIMB 13809 / X14)</name>
    <dbReference type="NCBI Taxonomy" id="323097"/>
    <lineage>
        <taxon>Bacteria</taxon>
        <taxon>Pseudomonadati</taxon>
        <taxon>Pseudomonadota</taxon>
        <taxon>Alphaproteobacteria</taxon>
        <taxon>Hyphomicrobiales</taxon>
        <taxon>Nitrobacteraceae</taxon>
        <taxon>Nitrobacter</taxon>
    </lineage>
</organism>
<feature type="chain" id="PRO_1000006598" description="Cysteine--tRNA ligase">
    <location>
        <begin position="1"/>
        <end position="482"/>
    </location>
</feature>
<feature type="short sequence motif" description="'HIGH' region">
    <location>
        <begin position="31"/>
        <end position="41"/>
    </location>
</feature>
<feature type="short sequence motif" description="'KMSKS' region">
    <location>
        <begin position="282"/>
        <end position="286"/>
    </location>
</feature>
<feature type="binding site" evidence="1">
    <location>
        <position position="29"/>
    </location>
    <ligand>
        <name>Zn(2+)</name>
        <dbReference type="ChEBI" id="CHEBI:29105"/>
    </ligand>
</feature>
<feature type="binding site" evidence="1">
    <location>
        <position position="224"/>
    </location>
    <ligand>
        <name>Zn(2+)</name>
        <dbReference type="ChEBI" id="CHEBI:29105"/>
    </ligand>
</feature>
<feature type="binding site" evidence="1">
    <location>
        <position position="249"/>
    </location>
    <ligand>
        <name>Zn(2+)</name>
        <dbReference type="ChEBI" id="CHEBI:29105"/>
    </ligand>
</feature>
<feature type="binding site" evidence="1">
    <location>
        <position position="253"/>
    </location>
    <ligand>
        <name>Zn(2+)</name>
        <dbReference type="ChEBI" id="CHEBI:29105"/>
    </ligand>
</feature>
<feature type="binding site" evidence="1">
    <location>
        <position position="285"/>
    </location>
    <ligand>
        <name>ATP</name>
        <dbReference type="ChEBI" id="CHEBI:30616"/>
    </ligand>
</feature>
<gene>
    <name evidence="1" type="primary">cysS</name>
    <name type="ordered locus">Nham_1488</name>
</gene>
<reference key="1">
    <citation type="submission" date="2006-03" db="EMBL/GenBank/DDBJ databases">
        <title>Complete sequence of chromosome of Nitrobacter hamburgensis X14.</title>
        <authorList>
            <consortium name="US DOE Joint Genome Institute"/>
            <person name="Copeland A."/>
            <person name="Lucas S."/>
            <person name="Lapidus A."/>
            <person name="Barry K."/>
            <person name="Detter J.C."/>
            <person name="Glavina del Rio T."/>
            <person name="Hammon N."/>
            <person name="Israni S."/>
            <person name="Dalin E."/>
            <person name="Tice H."/>
            <person name="Pitluck S."/>
            <person name="Chain P."/>
            <person name="Malfatti S."/>
            <person name="Shin M."/>
            <person name="Vergez L."/>
            <person name="Schmutz J."/>
            <person name="Larimer F."/>
            <person name="Land M."/>
            <person name="Hauser L."/>
            <person name="Kyrpides N."/>
            <person name="Ivanova N."/>
            <person name="Ward B."/>
            <person name="Arp D."/>
            <person name="Klotz M."/>
            <person name="Stein L."/>
            <person name="O'Mullan G."/>
            <person name="Starkenburg S."/>
            <person name="Sayavedra L."/>
            <person name="Poret-Peterson A.T."/>
            <person name="Gentry M.E."/>
            <person name="Bruce D."/>
            <person name="Richardson P."/>
        </authorList>
    </citation>
    <scope>NUCLEOTIDE SEQUENCE [LARGE SCALE GENOMIC DNA]</scope>
    <source>
        <strain>DSM 10229 / NCIMB 13809 / X14</strain>
    </source>
</reference>
<accession>Q1QN87</accession>
<protein>
    <recommendedName>
        <fullName evidence="1">Cysteine--tRNA ligase</fullName>
        <ecNumber evidence="1">6.1.1.16</ecNumber>
    </recommendedName>
    <alternativeName>
        <fullName evidence="1">Cysteinyl-tRNA synthetase</fullName>
        <shortName evidence="1">CysRS</shortName>
    </alternativeName>
</protein>
<proteinExistence type="inferred from homology"/>
<keyword id="KW-0030">Aminoacyl-tRNA synthetase</keyword>
<keyword id="KW-0067">ATP-binding</keyword>
<keyword id="KW-0963">Cytoplasm</keyword>
<keyword id="KW-0436">Ligase</keyword>
<keyword id="KW-0479">Metal-binding</keyword>
<keyword id="KW-0547">Nucleotide-binding</keyword>
<keyword id="KW-0648">Protein biosynthesis</keyword>
<keyword id="KW-1185">Reference proteome</keyword>
<keyword id="KW-0862">Zinc</keyword>
<dbReference type="EC" id="6.1.1.16" evidence="1"/>
<dbReference type="EMBL" id="CP000319">
    <property type="protein sequence ID" value="ABE62310.1"/>
    <property type="molecule type" value="Genomic_DNA"/>
</dbReference>
<dbReference type="RefSeq" id="WP_011510000.1">
    <property type="nucleotide sequence ID" value="NC_007964.1"/>
</dbReference>
<dbReference type="SMR" id="Q1QN87"/>
<dbReference type="STRING" id="323097.Nham_1488"/>
<dbReference type="KEGG" id="nha:Nham_1488"/>
<dbReference type="eggNOG" id="COG0215">
    <property type="taxonomic scope" value="Bacteria"/>
</dbReference>
<dbReference type="HOGENOM" id="CLU_013528_0_1_5"/>
<dbReference type="OrthoDB" id="9815130at2"/>
<dbReference type="Proteomes" id="UP000001953">
    <property type="component" value="Chromosome"/>
</dbReference>
<dbReference type="GO" id="GO:0005829">
    <property type="term" value="C:cytosol"/>
    <property type="evidence" value="ECO:0007669"/>
    <property type="project" value="TreeGrafter"/>
</dbReference>
<dbReference type="GO" id="GO:0005524">
    <property type="term" value="F:ATP binding"/>
    <property type="evidence" value="ECO:0007669"/>
    <property type="project" value="UniProtKB-UniRule"/>
</dbReference>
<dbReference type="GO" id="GO:0004817">
    <property type="term" value="F:cysteine-tRNA ligase activity"/>
    <property type="evidence" value="ECO:0007669"/>
    <property type="project" value="UniProtKB-UniRule"/>
</dbReference>
<dbReference type="GO" id="GO:0008270">
    <property type="term" value="F:zinc ion binding"/>
    <property type="evidence" value="ECO:0007669"/>
    <property type="project" value="UniProtKB-UniRule"/>
</dbReference>
<dbReference type="GO" id="GO:0006423">
    <property type="term" value="P:cysteinyl-tRNA aminoacylation"/>
    <property type="evidence" value="ECO:0007669"/>
    <property type="project" value="UniProtKB-UniRule"/>
</dbReference>
<dbReference type="CDD" id="cd00672">
    <property type="entry name" value="CysRS_core"/>
    <property type="match status" value="1"/>
</dbReference>
<dbReference type="FunFam" id="3.40.50.620:FF:000068">
    <property type="entry name" value="Cysteine--tRNA ligase"/>
    <property type="match status" value="1"/>
</dbReference>
<dbReference type="Gene3D" id="1.20.120.1910">
    <property type="entry name" value="Cysteine-tRNA ligase, C-terminal anti-codon recognition domain"/>
    <property type="match status" value="1"/>
</dbReference>
<dbReference type="Gene3D" id="3.40.50.620">
    <property type="entry name" value="HUPs"/>
    <property type="match status" value="1"/>
</dbReference>
<dbReference type="HAMAP" id="MF_00041">
    <property type="entry name" value="Cys_tRNA_synth"/>
    <property type="match status" value="1"/>
</dbReference>
<dbReference type="InterPro" id="IPR015803">
    <property type="entry name" value="Cys-tRNA-ligase"/>
</dbReference>
<dbReference type="InterPro" id="IPR015273">
    <property type="entry name" value="Cys-tRNA-synt_Ia_DALR"/>
</dbReference>
<dbReference type="InterPro" id="IPR024909">
    <property type="entry name" value="Cys-tRNA/MSH_ligase"/>
</dbReference>
<dbReference type="InterPro" id="IPR056411">
    <property type="entry name" value="CysS_C"/>
</dbReference>
<dbReference type="InterPro" id="IPR014729">
    <property type="entry name" value="Rossmann-like_a/b/a_fold"/>
</dbReference>
<dbReference type="InterPro" id="IPR032678">
    <property type="entry name" value="tRNA-synt_1_cat_dom"/>
</dbReference>
<dbReference type="InterPro" id="IPR009080">
    <property type="entry name" value="tRNAsynth_Ia_anticodon-bd"/>
</dbReference>
<dbReference type="NCBIfam" id="TIGR00435">
    <property type="entry name" value="cysS"/>
    <property type="match status" value="1"/>
</dbReference>
<dbReference type="PANTHER" id="PTHR10890:SF3">
    <property type="entry name" value="CYSTEINE--TRNA LIGASE, CYTOPLASMIC"/>
    <property type="match status" value="1"/>
</dbReference>
<dbReference type="PANTHER" id="PTHR10890">
    <property type="entry name" value="CYSTEINYL-TRNA SYNTHETASE"/>
    <property type="match status" value="1"/>
</dbReference>
<dbReference type="Pfam" id="PF23493">
    <property type="entry name" value="CysS_C"/>
    <property type="match status" value="1"/>
</dbReference>
<dbReference type="Pfam" id="PF01406">
    <property type="entry name" value="tRNA-synt_1e"/>
    <property type="match status" value="1"/>
</dbReference>
<dbReference type="PRINTS" id="PR00983">
    <property type="entry name" value="TRNASYNTHCYS"/>
</dbReference>
<dbReference type="SMART" id="SM00840">
    <property type="entry name" value="DALR_2"/>
    <property type="match status" value="1"/>
</dbReference>
<dbReference type="SUPFAM" id="SSF47323">
    <property type="entry name" value="Anticodon-binding domain of a subclass of class I aminoacyl-tRNA synthetases"/>
    <property type="match status" value="1"/>
</dbReference>
<dbReference type="SUPFAM" id="SSF52374">
    <property type="entry name" value="Nucleotidylyl transferase"/>
    <property type="match status" value="1"/>
</dbReference>
<comment type="catalytic activity">
    <reaction evidence="1">
        <text>tRNA(Cys) + L-cysteine + ATP = L-cysteinyl-tRNA(Cys) + AMP + diphosphate</text>
        <dbReference type="Rhea" id="RHEA:17773"/>
        <dbReference type="Rhea" id="RHEA-COMP:9661"/>
        <dbReference type="Rhea" id="RHEA-COMP:9679"/>
        <dbReference type="ChEBI" id="CHEBI:30616"/>
        <dbReference type="ChEBI" id="CHEBI:33019"/>
        <dbReference type="ChEBI" id="CHEBI:35235"/>
        <dbReference type="ChEBI" id="CHEBI:78442"/>
        <dbReference type="ChEBI" id="CHEBI:78517"/>
        <dbReference type="ChEBI" id="CHEBI:456215"/>
        <dbReference type="EC" id="6.1.1.16"/>
    </reaction>
</comment>
<comment type="cofactor">
    <cofactor evidence="1">
        <name>Zn(2+)</name>
        <dbReference type="ChEBI" id="CHEBI:29105"/>
    </cofactor>
    <text evidence="1">Binds 1 zinc ion per subunit.</text>
</comment>
<comment type="subunit">
    <text evidence="1">Monomer.</text>
</comment>
<comment type="subcellular location">
    <subcellularLocation>
        <location evidence="1">Cytoplasm</location>
    </subcellularLocation>
</comment>
<comment type="similarity">
    <text evidence="1">Belongs to the class-I aminoacyl-tRNA synthetase family.</text>
</comment>
<sequence>MELRLYDTLTKEKRAFIPIDPSNVRMYVCGPTVYDFAHIGNARPVIVFDVLFRLLQHIYGTDHVTYVRNITDVDDKINDRAARDFPGLPLNEAIRKVTEKTAEQFQADVAALGCLPPTHQPRATEFVLPRDDGRADMVTLIKQLIARGHAYEAGGEVLFDVQSMPDYGALSGRRLEEQKAGARVAVDAHKRNPADFVLWKLSSENEPGWDSPWGRGRPGWHIECSAMSAAYLGDVFDIHGGGLDLIFPHHENEIAQSRCAHGTHTMANYWMHNGFLQVEGEKMSKSLGNFFTINELLTTEKFGGRKWPGEVLRLAMLKTHYRSPIDWTVDALEESKRILDSWYDIVGDDTEAIGEVDREVSAFLGDDLNTSAAVTRLHAIAASRIGKSGQLQIDAKRKLKVSAVMLGLLGRTKREYLETDPQVILVDSNLVAHLLSDRAAARARKDFKESDRIRDELAAMGVVLKDGKDADGKPETTWEIAR</sequence>
<evidence type="ECO:0000255" key="1">
    <source>
        <dbReference type="HAMAP-Rule" id="MF_00041"/>
    </source>
</evidence>
<name>SYC_NITHX</name>